<sequence>MKTVLLTGFDPFGGENINPAWEVAKGLHEKTIGEYKIISKQVPTVFHKSISVLKEYIEELAPEIIICIGQAGGRPDITIERVAINIDDARIADNEGNQPVDVPVVEEGVIAYWSTLPMKAIVKKLREEGIPSSVSQTAGTFVCNHLFYGLMHELEKHDKKIKGGFIHIPFLPEQASNYPGQPSMSLSTIRKGIELAIEVTTTVKVDIVEVGGATH</sequence>
<gene>
    <name evidence="1" type="primary">pcp</name>
    <name type="ordered locus">BC_3063</name>
</gene>
<comment type="function">
    <text evidence="1">Removes 5-oxoproline from various penultimate amino acid residues except L-proline.</text>
</comment>
<comment type="catalytic activity">
    <reaction evidence="1">
        <text>Release of an N-terminal pyroglutamyl group from a polypeptide, the second amino acid generally not being Pro.</text>
        <dbReference type="EC" id="3.4.19.3"/>
    </reaction>
</comment>
<comment type="subunit">
    <text evidence="1">Homotetramer.</text>
</comment>
<comment type="subcellular location">
    <subcellularLocation>
        <location evidence="1">Cytoplasm</location>
    </subcellularLocation>
</comment>
<comment type="similarity">
    <text evidence="1">Belongs to the peptidase C15 family.</text>
</comment>
<organism>
    <name type="scientific">Bacillus cereus (strain ATCC 14579 / DSM 31 / CCUG 7414 / JCM 2152 / NBRC 15305 / NCIMB 9373 / NCTC 2599 / NRRL B-3711)</name>
    <dbReference type="NCBI Taxonomy" id="226900"/>
    <lineage>
        <taxon>Bacteria</taxon>
        <taxon>Bacillati</taxon>
        <taxon>Bacillota</taxon>
        <taxon>Bacilli</taxon>
        <taxon>Bacillales</taxon>
        <taxon>Bacillaceae</taxon>
        <taxon>Bacillus</taxon>
        <taxon>Bacillus cereus group</taxon>
    </lineage>
</organism>
<proteinExistence type="inferred from homology"/>
<accession>Q81BT3</accession>
<dbReference type="EC" id="3.4.19.3" evidence="1"/>
<dbReference type="EMBL" id="AE016877">
    <property type="protein sequence ID" value="AAP10010.1"/>
    <property type="molecule type" value="Genomic_DNA"/>
</dbReference>
<dbReference type="RefSeq" id="NP_832809.1">
    <property type="nucleotide sequence ID" value="NC_004722.1"/>
</dbReference>
<dbReference type="RefSeq" id="WP_000859710.1">
    <property type="nucleotide sequence ID" value="NZ_CP138336.1"/>
</dbReference>
<dbReference type="SMR" id="Q81BT3"/>
<dbReference type="STRING" id="226900.BC_3063"/>
<dbReference type="MEROPS" id="C15.001"/>
<dbReference type="KEGG" id="bce:BC3063"/>
<dbReference type="PATRIC" id="fig|226900.8.peg.3138"/>
<dbReference type="HOGENOM" id="CLU_043960_4_0_9"/>
<dbReference type="OrthoDB" id="9779738at2"/>
<dbReference type="Proteomes" id="UP000001417">
    <property type="component" value="Chromosome"/>
</dbReference>
<dbReference type="GO" id="GO:0005829">
    <property type="term" value="C:cytosol"/>
    <property type="evidence" value="ECO:0007669"/>
    <property type="project" value="InterPro"/>
</dbReference>
<dbReference type="GO" id="GO:0016920">
    <property type="term" value="F:pyroglutamyl-peptidase activity"/>
    <property type="evidence" value="ECO:0007669"/>
    <property type="project" value="UniProtKB-UniRule"/>
</dbReference>
<dbReference type="GO" id="GO:0006508">
    <property type="term" value="P:proteolysis"/>
    <property type="evidence" value="ECO:0007669"/>
    <property type="project" value="UniProtKB-KW"/>
</dbReference>
<dbReference type="CDD" id="cd00501">
    <property type="entry name" value="Peptidase_C15"/>
    <property type="match status" value="1"/>
</dbReference>
<dbReference type="FunFam" id="3.40.630.20:FF:000001">
    <property type="entry name" value="Pyrrolidone-carboxylate peptidase"/>
    <property type="match status" value="1"/>
</dbReference>
<dbReference type="Gene3D" id="3.40.630.20">
    <property type="entry name" value="Peptidase C15, pyroglutamyl peptidase I-like"/>
    <property type="match status" value="1"/>
</dbReference>
<dbReference type="HAMAP" id="MF_00417">
    <property type="entry name" value="Pyrrolid_peptidase"/>
    <property type="match status" value="1"/>
</dbReference>
<dbReference type="InterPro" id="IPR000816">
    <property type="entry name" value="Peptidase_C15"/>
</dbReference>
<dbReference type="InterPro" id="IPR016125">
    <property type="entry name" value="Peptidase_C15-like"/>
</dbReference>
<dbReference type="InterPro" id="IPR036440">
    <property type="entry name" value="Peptidase_C15-like_sf"/>
</dbReference>
<dbReference type="InterPro" id="IPR029762">
    <property type="entry name" value="PGP-I_bact-type"/>
</dbReference>
<dbReference type="InterPro" id="IPR033694">
    <property type="entry name" value="PGPEP1_Cys_AS"/>
</dbReference>
<dbReference type="InterPro" id="IPR033693">
    <property type="entry name" value="PGPEP1_Glu_AS"/>
</dbReference>
<dbReference type="NCBIfam" id="NF009676">
    <property type="entry name" value="PRK13197.1"/>
    <property type="match status" value="1"/>
</dbReference>
<dbReference type="NCBIfam" id="TIGR00504">
    <property type="entry name" value="pyro_pdase"/>
    <property type="match status" value="1"/>
</dbReference>
<dbReference type="PANTHER" id="PTHR23402">
    <property type="entry name" value="PROTEASE FAMILY C15 PYROGLUTAMYL-PEPTIDASE I-RELATED"/>
    <property type="match status" value="1"/>
</dbReference>
<dbReference type="PANTHER" id="PTHR23402:SF1">
    <property type="entry name" value="PYROGLUTAMYL-PEPTIDASE I"/>
    <property type="match status" value="1"/>
</dbReference>
<dbReference type="Pfam" id="PF01470">
    <property type="entry name" value="Peptidase_C15"/>
    <property type="match status" value="1"/>
</dbReference>
<dbReference type="PIRSF" id="PIRSF015592">
    <property type="entry name" value="Prld-crbxl_pptds"/>
    <property type="match status" value="1"/>
</dbReference>
<dbReference type="PRINTS" id="PR00706">
    <property type="entry name" value="PYROGLUPTASE"/>
</dbReference>
<dbReference type="SUPFAM" id="SSF53182">
    <property type="entry name" value="Pyrrolidone carboxyl peptidase (pyroglutamate aminopeptidase)"/>
    <property type="match status" value="1"/>
</dbReference>
<dbReference type="PROSITE" id="PS01334">
    <property type="entry name" value="PYRASE_CYS"/>
    <property type="match status" value="1"/>
</dbReference>
<dbReference type="PROSITE" id="PS01333">
    <property type="entry name" value="PYRASE_GLU"/>
    <property type="match status" value="1"/>
</dbReference>
<feature type="chain" id="PRO_0000184709" description="Pyrrolidone-carboxylate peptidase">
    <location>
        <begin position="1"/>
        <end position="215"/>
    </location>
</feature>
<feature type="active site" evidence="1">
    <location>
        <position position="80"/>
    </location>
</feature>
<feature type="active site" evidence="1">
    <location>
        <position position="143"/>
    </location>
</feature>
<feature type="active site" evidence="1">
    <location>
        <position position="167"/>
    </location>
</feature>
<keyword id="KW-0963">Cytoplasm</keyword>
<keyword id="KW-0378">Hydrolase</keyword>
<keyword id="KW-0645">Protease</keyword>
<keyword id="KW-1185">Reference proteome</keyword>
<keyword id="KW-0788">Thiol protease</keyword>
<evidence type="ECO:0000255" key="1">
    <source>
        <dbReference type="HAMAP-Rule" id="MF_00417"/>
    </source>
</evidence>
<protein>
    <recommendedName>
        <fullName evidence="1">Pyrrolidone-carboxylate peptidase</fullName>
        <ecNumber evidence="1">3.4.19.3</ecNumber>
    </recommendedName>
    <alternativeName>
        <fullName evidence="1">5-oxoprolyl-peptidase</fullName>
    </alternativeName>
    <alternativeName>
        <fullName evidence="1">Pyroglutamyl-peptidase I</fullName>
        <shortName evidence="1">PGP-I</shortName>
        <shortName evidence="1">Pyrase</shortName>
    </alternativeName>
</protein>
<reference key="1">
    <citation type="journal article" date="2003" name="Nature">
        <title>Genome sequence of Bacillus cereus and comparative analysis with Bacillus anthracis.</title>
        <authorList>
            <person name="Ivanova N."/>
            <person name="Sorokin A."/>
            <person name="Anderson I."/>
            <person name="Galleron N."/>
            <person name="Candelon B."/>
            <person name="Kapatral V."/>
            <person name="Bhattacharyya A."/>
            <person name="Reznik G."/>
            <person name="Mikhailova N."/>
            <person name="Lapidus A."/>
            <person name="Chu L."/>
            <person name="Mazur M."/>
            <person name="Goltsman E."/>
            <person name="Larsen N."/>
            <person name="D'Souza M."/>
            <person name="Walunas T."/>
            <person name="Grechkin Y."/>
            <person name="Pusch G."/>
            <person name="Haselkorn R."/>
            <person name="Fonstein M."/>
            <person name="Ehrlich S.D."/>
            <person name="Overbeek R."/>
            <person name="Kyrpides N.C."/>
        </authorList>
    </citation>
    <scope>NUCLEOTIDE SEQUENCE [LARGE SCALE GENOMIC DNA]</scope>
    <source>
        <strain>ATCC 14579 / DSM 31 / CCUG 7414 / JCM 2152 / NBRC 15305 / NCIMB 9373 / NCTC 2599 / NRRL B-3711</strain>
    </source>
</reference>
<name>PCP_BACCR</name>